<proteinExistence type="evidence at transcript level"/>
<comment type="function">
    <text>May modify the assembly dynamics of microtubules, such that microtubules are slightly longer, but more dynamic.</text>
</comment>
<comment type="subcellular location">
    <subcellularLocation>
        <location evidence="2">Cytoplasm</location>
        <location evidence="2">Cytoskeleton</location>
    </subcellularLocation>
</comment>
<comment type="similarity">
    <text evidence="2">Belongs to the WD repeat EMAP family.</text>
</comment>
<organism>
    <name type="scientific">Strongylocentrotus purpuratus</name>
    <name type="common">Purple sea urchin</name>
    <dbReference type="NCBI Taxonomy" id="7668"/>
    <lineage>
        <taxon>Eukaryota</taxon>
        <taxon>Metazoa</taxon>
        <taxon>Echinodermata</taxon>
        <taxon>Eleutherozoa</taxon>
        <taxon>Echinozoa</taxon>
        <taxon>Echinoidea</taxon>
        <taxon>Euechinoidea</taxon>
        <taxon>Echinacea</taxon>
        <taxon>Camarodonta</taxon>
        <taxon>Echinidea</taxon>
        <taxon>Strongylocentrotidae</taxon>
        <taxon>Strongylocentrotus</taxon>
    </lineage>
</organism>
<gene>
    <name type="primary">EMAP</name>
</gene>
<dbReference type="EMBL" id="U15551">
    <property type="protein sequence ID" value="AAA61945.1"/>
    <property type="molecule type" value="mRNA"/>
</dbReference>
<dbReference type="PIR" id="A55665">
    <property type="entry name" value="A55665"/>
</dbReference>
<dbReference type="RefSeq" id="NP_999633.1">
    <property type="nucleotide sequence ID" value="NM_214468.1"/>
</dbReference>
<dbReference type="SMR" id="Q26613"/>
<dbReference type="STRING" id="7668.Q26613"/>
<dbReference type="EnsemblMetazoa" id="NM_214468">
    <property type="protein sequence ID" value="NP_999633"/>
    <property type="gene ID" value="GeneID_373186"/>
</dbReference>
<dbReference type="GeneID" id="373186"/>
<dbReference type="KEGG" id="spu:373186"/>
<dbReference type="CTD" id="373186"/>
<dbReference type="eggNOG" id="KOG2106">
    <property type="taxonomic scope" value="Eukaryota"/>
</dbReference>
<dbReference type="HOGENOM" id="CLU_011754_3_2_1"/>
<dbReference type="InParanoid" id="Q26613"/>
<dbReference type="OMA" id="DIQWFTH"/>
<dbReference type="OrthoDB" id="47802at2759"/>
<dbReference type="PhylomeDB" id="Q26613"/>
<dbReference type="Proteomes" id="UP000007110">
    <property type="component" value="Unassembled WGS sequence"/>
</dbReference>
<dbReference type="GO" id="GO:0005737">
    <property type="term" value="C:cytoplasm"/>
    <property type="evidence" value="ECO:0007669"/>
    <property type="project" value="UniProtKB-KW"/>
</dbReference>
<dbReference type="GO" id="GO:0005874">
    <property type="term" value="C:microtubule"/>
    <property type="evidence" value="ECO:0007669"/>
    <property type="project" value="UniProtKB-KW"/>
</dbReference>
<dbReference type="GO" id="GO:0008017">
    <property type="term" value="F:microtubule binding"/>
    <property type="evidence" value="ECO:0000318"/>
    <property type="project" value="GO_Central"/>
</dbReference>
<dbReference type="GO" id="GO:0000226">
    <property type="term" value="P:microtubule cytoskeleton organization"/>
    <property type="evidence" value="ECO:0000318"/>
    <property type="project" value="GO_Central"/>
</dbReference>
<dbReference type="FunFam" id="2.130.10.10:FF:002876">
    <property type="entry name" value="77 kDa echinoderm microtubule-associated protein"/>
    <property type="match status" value="1"/>
</dbReference>
<dbReference type="FunFam" id="2.130.10.10:FF:002220">
    <property type="entry name" value="EMAP-like 3"/>
    <property type="match status" value="1"/>
</dbReference>
<dbReference type="FunFam" id="2.130.10.10:FF:000005">
    <property type="entry name" value="Putative echinoderm microtubule-associated protein-like 1"/>
    <property type="match status" value="1"/>
</dbReference>
<dbReference type="Gene3D" id="2.130.10.10">
    <property type="entry name" value="YVTN repeat-like/Quinoprotein amine dehydrogenase"/>
    <property type="match status" value="2"/>
</dbReference>
<dbReference type="InterPro" id="IPR055442">
    <property type="entry name" value="Beta-prop_EML-like_2nd"/>
</dbReference>
<dbReference type="InterPro" id="IPR055439">
    <property type="entry name" value="Beta-prop_EML_1st"/>
</dbReference>
<dbReference type="InterPro" id="IPR005108">
    <property type="entry name" value="HELP"/>
</dbReference>
<dbReference type="InterPro" id="IPR011044">
    <property type="entry name" value="Quino_amine_DH_bsu"/>
</dbReference>
<dbReference type="InterPro" id="IPR011047">
    <property type="entry name" value="Quinoprotein_ADH-like_sf"/>
</dbReference>
<dbReference type="InterPro" id="IPR015943">
    <property type="entry name" value="WD40/YVTN_repeat-like_dom_sf"/>
</dbReference>
<dbReference type="InterPro" id="IPR001680">
    <property type="entry name" value="WD40_rpt"/>
</dbReference>
<dbReference type="InterPro" id="IPR050630">
    <property type="entry name" value="WD_repeat_EMAP"/>
</dbReference>
<dbReference type="PANTHER" id="PTHR13720:SF50">
    <property type="entry name" value="ECHINODERM MICROTUBULE-ASSOCIATED PROTEIN-LIKE 2"/>
    <property type="match status" value="1"/>
</dbReference>
<dbReference type="PANTHER" id="PTHR13720">
    <property type="entry name" value="WD-40 REPEAT PROTEIN"/>
    <property type="match status" value="1"/>
</dbReference>
<dbReference type="Pfam" id="PF23409">
    <property type="entry name" value="Beta-prop_EML"/>
    <property type="match status" value="1"/>
</dbReference>
<dbReference type="Pfam" id="PF23414">
    <property type="entry name" value="Beta-prop_EML_2"/>
    <property type="match status" value="1"/>
</dbReference>
<dbReference type="Pfam" id="PF03451">
    <property type="entry name" value="HELP"/>
    <property type="match status" value="1"/>
</dbReference>
<dbReference type="SMART" id="SM00320">
    <property type="entry name" value="WD40"/>
    <property type="match status" value="9"/>
</dbReference>
<dbReference type="SUPFAM" id="SSF50998">
    <property type="entry name" value="Quinoprotein alcohol dehydrogenase-like"/>
    <property type="match status" value="1"/>
</dbReference>
<dbReference type="SUPFAM" id="SSF50969">
    <property type="entry name" value="YVTN repeat-like/Quinoprotein amine dehydrogenase"/>
    <property type="match status" value="1"/>
</dbReference>
<dbReference type="PROSITE" id="PS50082">
    <property type="entry name" value="WD_REPEATS_2"/>
    <property type="match status" value="4"/>
</dbReference>
<dbReference type="PROSITE" id="PS50294">
    <property type="entry name" value="WD_REPEATS_REGION"/>
    <property type="match status" value="1"/>
</dbReference>
<evidence type="ECO:0000256" key="1">
    <source>
        <dbReference type="SAM" id="MobiDB-lite"/>
    </source>
</evidence>
<evidence type="ECO:0000305" key="2"/>
<sequence length="686" mass="75454">MSNRPSTARPNSASPRRPNTPGRPSSARPGSGRTRASPRGGSAGGKRFSKEPQHNAEEGYVRIYLRGRPVTNYLPSDVEDYDLNAKHPAPTEKLKLDWVYGYRGRDCRCNLYLLPTGEIIYFMAAVVVLYNVEEQNQRHYTGHNDDVKSIAVHPDSVTIATGQVAGHDPDEGKPHVRIWNSITMETLHVLGLGFFDRAVCALSFSKVNVGVHLAAVDESNEHVLSVWDWKKEKKLSDTKSSQDPVLACEYHPMNDEQIITLGKGHIHFWNTTGGKLVKKSGIFEKYDKPKFVLSLAFTGNGDVITGDSNGNMYIWGKGNTRISQAILGAHEGGIFSLCVMNDGQILSGGGKDKKVILWTADYQQSEVTQVTEATGPVRTLCKGKGEDFYVGTTRNAILSGNMGGEFNTLVQAHTEELWGLALHPTQGLFLTCGYDKNVIMWDFEQHKPMWNKLMEDGCQSAGFHPSGAVVAIGMTSGRWVALDVESQDLITVHTDGKEQHDIIRYSPDGNFLAVASHDNYIYIYSVTEEGRKYSKVGKCSGHSSFVTHIDWSADSTKLQSNSGDYELLFWDAATCKQIVISKETRDVEWATFTGVLGYPVCGIWPEGSDGTDVNTTARSANGNLLASGDDFGKINLFRYPVNHPKADCTSFKGHSSHVTSVAFNGDSTKLISTGGRDMSCMQWSVV</sequence>
<reference key="1">
    <citation type="journal article" date="1994" name="J. Biol. Chem.">
        <title>Molecular characterization of the 77-kDa echinoderm microtubule-associated protein. Homology to the beta-transducin family.</title>
        <authorList>
            <person name="Li Q."/>
            <person name="Suprenant K.A."/>
        </authorList>
    </citation>
    <scope>NUCLEOTIDE SEQUENCE [MRNA]</scope>
</reference>
<accession>Q26613</accession>
<feature type="chain" id="PRO_0000050964" description="77 kDa echinoderm microtubule-associated protein">
    <location>
        <begin position="1"/>
        <end position="686"/>
    </location>
</feature>
<feature type="repeat" description="WD 1">
    <location>
        <begin position="142"/>
        <end position="189"/>
    </location>
</feature>
<feature type="repeat" description="WD 2">
    <location>
        <begin position="194"/>
        <end position="237"/>
    </location>
</feature>
<feature type="repeat" description="WD 3">
    <location>
        <begin position="240"/>
        <end position="279"/>
    </location>
</feature>
<feature type="repeat" description="WD 4">
    <location>
        <begin position="287"/>
        <end position="325"/>
    </location>
</feature>
<feature type="repeat" description="WD 5">
    <location>
        <begin position="329"/>
        <end position="368"/>
    </location>
</feature>
<feature type="repeat" description="WD 6">
    <location>
        <begin position="412"/>
        <end position="451"/>
    </location>
</feature>
<feature type="repeat" description="WD 7">
    <location>
        <begin position="495"/>
        <end position="534"/>
    </location>
</feature>
<feature type="repeat" description="WD 8">
    <location>
        <begin position="541"/>
        <end position="580"/>
    </location>
</feature>
<feature type="repeat" description="WD 9">
    <location>
        <begin position="608"/>
        <end position="647"/>
    </location>
</feature>
<feature type="repeat" description="WD 10">
    <location>
        <begin position="653"/>
        <end position="685"/>
    </location>
</feature>
<feature type="region of interest" description="Disordered" evidence="1">
    <location>
        <begin position="1"/>
        <end position="53"/>
    </location>
</feature>
<feature type="compositionally biased region" description="Polar residues" evidence="1">
    <location>
        <begin position="1"/>
        <end position="14"/>
    </location>
</feature>
<name>EMAP_STRPU</name>
<protein>
    <recommendedName>
        <fullName>77 kDa echinoderm microtubule-associated protein</fullName>
    </recommendedName>
</protein>
<keyword id="KW-0963">Cytoplasm</keyword>
<keyword id="KW-0206">Cytoskeleton</keyword>
<keyword id="KW-0493">Microtubule</keyword>
<keyword id="KW-1185">Reference proteome</keyword>
<keyword id="KW-0677">Repeat</keyword>
<keyword id="KW-0853">WD repeat</keyword>